<evidence type="ECO:0000255" key="1"/>
<evidence type="ECO:0000255" key="2">
    <source>
        <dbReference type="PROSITE-ProRule" id="PRU00498"/>
    </source>
</evidence>
<evidence type="ECO:0000256" key="3">
    <source>
        <dbReference type="SAM" id="MobiDB-lite"/>
    </source>
</evidence>
<evidence type="ECO:0000269" key="4">
    <source>
    </source>
</evidence>
<evidence type="ECO:0000269" key="5">
    <source>
    </source>
</evidence>
<evidence type="ECO:0000269" key="6">
    <source>
    </source>
</evidence>
<evidence type="ECO:0000269" key="7">
    <source>
    </source>
</evidence>
<evidence type="ECO:0000269" key="8">
    <source>
    </source>
</evidence>
<evidence type="ECO:0000269" key="9">
    <source>
    </source>
</evidence>
<evidence type="ECO:0000269" key="10">
    <source>
    </source>
</evidence>
<evidence type="ECO:0000303" key="11">
    <source>
    </source>
</evidence>
<evidence type="ECO:0000305" key="12"/>
<name>CAN1_CANAL</name>
<proteinExistence type="evidence at transcript level"/>
<protein>
    <recommendedName>
        <fullName evidence="11">Lysine/arginine permease CAN1</fullName>
    </recommendedName>
    <alternativeName>
        <fullName evidence="12">Basic amino acids permease CAN1</fullName>
    </alternativeName>
</protein>
<accession>A0A1D8PPI5</accession>
<keyword id="KW-0029">Amino-acid transport</keyword>
<keyword id="KW-1003">Cell membrane</keyword>
<keyword id="KW-0325">Glycoprotein</keyword>
<keyword id="KW-0472">Membrane</keyword>
<keyword id="KW-1185">Reference proteome</keyword>
<keyword id="KW-0812">Transmembrane</keyword>
<keyword id="KW-1133">Transmembrane helix</keyword>
<keyword id="KW-0813">Transport</keyword>
<sequence length="571" mass="63331">MPEDYEKYRMGSSNESHQKSVQPISSSISKSNKKTKHQTDFVQDSDIIEASSINDEFGEVKRDLKARHVSMIAIGGTIGTGLFISTGSLLHTTGPVMSLISFLFVTTICFSVTQSLGEMATYIPISGSFAQFVTRWVSKSCGAANGWLYWFSWAVTFGLELSVVGQVIQFWTDAVPLAAWISIFFVILTIFNFFPVKFYGEVEFWIASIKIIAVFGWIIYAFIMVCGAGKTGPVGFRYWRNGYAWGDGILVNNNGKYVAAFVSGLINSIFTFQGTELVAVTAGEASPRALRSAIRKVMFRILVFYVLCMLFMGLLVPYNDPKLTQDGGFTRNSPFLIAMENSGTKVLPHIFNAVIVTTIISAGNSNIYSGSRILYGLAQAGVAPKFFLRTNKGGVPFFAVAFTAAFGALGYLACSSQGNKAFTWLLNITATAGLISWGFISVSHIRFMKTLQRRGISRDTLPFKAFFMPFSAYYGMVVCFIVVLIQGFTVFWDFNASDFFTAYISVILFVVLWVGFHFFFYGFGKDSFKMSNILVPLDECDIDSGVRDINDAEFDIPPPKNAWDKFWAIVA</sequence>
<gene>
    <name evidence="11" type="primary">CAN1</name>
    <name type="ordered locus">CAALFM_C600960WA</name>
</gene>
<organism>
    <name type="scientific">Candida albicans (strain SC5314 / ATCC MYA-2876)</name>
    <name type="common">Yeast</name>
    <dbReference type="NCBI Taxonomy" id="237561"/>
    <lineage>
        <taxon>Eukaryota</taxon>
        <taxon>Fungi</taxon>
        <taxon>Dikarya</taxon>
        <taxon>Ascomycota</taxon>
        <taxon>Saccharomycotina</taxon>
        <taxon>Pichiomycetes</taxon>
        <taxon>Debaryomycetaceae</taxon>
        <taxon>Candida/Lodderomyces clade</taxon>
        <taxon>Candida</taxon>
    </lineage>
</organism>
<feature type="chain" id="PRO_0000439803" description="Lysine/arginine permease CAN1">
    <location>
        <begin position="1"/>
        <end position="571"/>
    </location>
</feature>
<feature type="transmembrane region" description="Helical" evidence="1">
    <location>
        <begin position="69"/>
        <end position="89"/>
    </location>
</feature>
<feature type="transmembrane region" description="Helical" evidence="1">
    <location>
        <begin position="92"/>
        <end position="112"/>
    </location>
</feature>
<feature type="transmembrane region" description="Helical" evidence="1">
    <location>
        <begin position="148"/>
        <end position="168"/>
    </location>
</feature>
<feature type="transmembrane region" description="Helical" evidence="1">
    <location>
        <begin position="174"/>
        <end position="194"/>
    </location>
</feature>
<feature type="transmembrane region" description="Helical" evidence="1">
    <location>
        <begin position="204"/>
        <end position="224"/>
    </location>
</feature>
<feature type="transmembrane region" description="Helical" evidence="1">
    <location>
        <begin position="258"/>
        <end position="278"/>
    </location>
</feature>
<feature type="transmembrane region" description="Helical" evidence="1">
    <location>
        <begin position="297"/>
        <end position="317"/>
    </location>
</feature>
<feature type="transmembrane region" description="Helical" evidence="1">
    <location>
        <begin position="343"/>
        <end position="363"/>
    </location>
</feature>
<feature type="transmembrane region" description="Helical" evidence="1">
    <location>
        <begin position="393"/>
        <end position="413"/>
    </location>
</feature>
<feature type="transmembrane region" description="Helical" evidence="1">
    <location>
        <begin position="422"/>
        <end position="442"/>
    </location>
</feature>
<feature type="transmembrane region" description="Helical" evidence="1">
    <location>
        <begin position="465"/>
        <end position="485"/>
    </location>
</feature>
<feature type="transmembrane region" description="Helical" evidence="1">
    <location>
        <begin position="504"/>
        <end position="524"/>
    </location>
</feature>
<feature type="region of interest" description="Disordered" evidence="3">
    <location>
        <begin position="1"/>
        <end position="38"/>
    </location>
</feature>
<feature type="compositionally biased region" description="Low complexity" evidence="3">
    <location>
        <begin position="19"/>
        <end position="30"/>
    </location>
</feature>
<feature type="glycosylation site" description="N-linked (GlcNAc...) asparagine" evidence="2">
    <location>
        <position position="14"/>
    </location>
</feature>
<feature type="glycosylation site" description="N-linked (GlcNAc...) asparagine" evidence="2">
    <location>
        <position position="495"/>
    </location>
</feature>
<dbReference type="EMBL" id="CP017628">
    <property type="protein sequence ID" value="AOW30042.1"/>
    <property type="molecule type" value="Genomic_DNA"/>
</dbReference>
<dbReference type="RefSeq" id="XP_714306.1">
    <property type="nucleotide sequence ID" value="XM_709213.1"/>
</dbReference>
<dbReference type="SMR" id="A0A1D8PPI5"/>
<dbReference type="FunCoup" id="A0A1D8PPI5">
    <property type="interactions" value="190"/>
</dbReference>
<dbReference type="STRING" id="237561.A0A1D8PPI5"/>
<dbReference type="GlyCosmos" id="A0A1D8PPI5">
    <property type="glycosylation" value="2 sites, No reported glycans"/>
</dbReference>
<dbReference type="EnsemblFungi" id="C6_00960W_A-T">
    <property type="protein sequence ID" value="C6_00960W_A-T-p1"/>
    <property type="gene ID" value="C6_00960W_A"/>
</dbReference>
<dbReference type="GeneID" id="3644035"/>
<dbReference type="KEGG" id="cal:CAALFM_C600960WA"/>
<dbReference type="CGD" id="CAL0000201116">
    <property type="gene designation" value="CAN1"/>
</dbReference>
<dbReference type="VEuPathDB" id="FungiDB:C6_00960W_A"/>
<dbReference type="eggNOG" id="KOG1286">
    <property type="taxonomic scope" value="Eukaryota"/>
</dbReference>
<dbReference type="InParanoid" id="A0A1D8PPI5"/>
<dbReference type="OrthoDB" id="3900342at2759"/>
<dbReference type="Proteomes" id="UP000000559">
    <property type="component" value="Chromosome 6"/>
</dbReference>
<dbReference type="GO" id="GO:0016020">
    <property type="term" value="C:membrane"/>
    <property type="evidence" value="ECO:0000318"/>
    <property type="project" value="GO_Central"/>
</dbReference>
<dbReference type="GO" id="GO:0005886">
    <property type="term" value="C:plasma membrane"/>
    <property type="evidence" value="ECO:0000316"/>
    <property type="project" value="CGD"/>
</dbReference>
<dbReference type="GO" id="GO:0016597">
    <property type="term" value="F:amino acid binding"/>
    <property type="evidence" value="ECO:0000303"/>
    <property type="project" value="CGD"/>
</dbReference>
<dbReference type="GO" id="GO:0015171">
    <property type="term" value="F:amino acid transmembrane transporter activity"/>
    <property type="evidence" value="ECO:0000318"/>
    <property type="project" value="GO_Central"/>
</dbReference>
<dbReference type="GO" id="GO:0015174">
    <property type="term" value="F:basic amino acid transmembrane transporter activity"/>
    <property type="evidence" value="ECO:0000250"/>
    <property type="project" value="CGD"/>
</dbReference>
<dbReference type="GO" id="GO:0005290">
    <property type="term" value="F:L-histidine transmembrane transporter activity"/>
    <property type="evidence" value="ECO:0000314"/>
    <property type="project" value="CGD"/>
</dbReference>
<dbReference type="GO" id="GO:0015189">
    <property type="term" value="F:L-lysine transmembrane transporter activity"/>
    <property type="evidence" value="ECO:0000314"/>
    <property type="project" value="CGD"/>
</dbReference>
<dbReference type="GO" id="GO:0003333">
    <property type="term" value="P:amino acid transmembrane transport"/>
    <property type="evidence" value="ECO:0000318"/>
    <property type="project" value="GO_Central"/>
</dbReference>
<dbReference type="GO" id="GO:0015802">
    <property type="term" value="P:basic amino acid transport"/>
    <property type="evidence" value="ECO:0000314"/>
    <property type="project" value="CGD"/>
</dbReference>
<dbReference type="FunFam" id="1.20.1740.10:FF:000006">
    <property type="entry name" value="General amino acid permease"/>
    <property type="match status" value="1"/>
</dbReference>
<dbReference type="Gene3D" id="1.20.1740.10">
    <property type="entry name" value="Amino acid/polyamine transporter I"/>
    <property type="match status" value="1"/>
</dbReference>
<dbReference type="InterPro" id="IPR004841">
    <property type="entry name" value="AA-permease/SLC12A_dom"/>
</dbReference>
<dbReference type="InterPro" id="IPR004840">
    <property type="entry name" value="Amino_acid_permease_CS"/>
</dbReference>
<dbReference type="InterPro" id="IPR050524">
    <property type="entry name" value="APC_YAT"/>
</dbReference>
<dbReference type="PANTHER" id="PTHR43341">
    <property type="entry name" value="AMINO ACID PERMEASE"/>
    <property type="match status" value="1"/>
</dbReference>
<dbReference type="PANTHER" id="PTHR43341:SF4">
    <property type="entry name" value="ARGININE PERMEASE CAN1-RELATED"/>
    <property type="match status" value="1"/>
</dbReference>
<dbReference type="Pfam" id="PF00324">
    <property type="entry name" value="AA_permease"/>
    <property type="match status" value="1"/>
</dbReference>
<dbReference type="PIRSF" id="PIRSF006060">
    <property type="entry name" value="AA_transporter"/>
    <property type="match status" value="1"/>
</dbReference>
<dbReference type="PROSITE" id="PS00218">
    <property type="entry name" value="AMINO_ACID_PERMEASE_1"/>
    <property type="match status" value="1"/>
</dbReference>
<reference key="1">
    <citation type="journal article" date="2004" name="Proc. Natl. Acad. Sci. U.S.A.">
        <title>The diploid genome sequence of Candida albicans.</title>
        <authorList>
            <person name="Jones T."/>
            <person name="Federspiel N.A."/>
            <person name="Chibana H."/>
            <person name="Dungan J."/>
            <person name="Kalman S."/>
            <person name="Magee B.B."/>
            <person name="Newport G."/>
            <person name="Thorstenson Y.R."/>
            <person name="Agabian N."/>
            <person name="Magee P.T."/>
            <person name="Davis R.W."/>
            <person name="Scherer S."/>
        </authorList>
    </citation>
    <scope>NUCLEOTIDE SEQUENCE [LARGE SCALE GENOMIC DNA]</scope>
    <source>
        <strain>SC5314 / ATCC MYA-2876</strain>
    </source>
</reference>
<reference key="2">
    <citation type="journal article" date="2007" name="Genome Biol.">
        <title>Assembly of the Candida albicans genome into sixteen supercontigs aligned on the eight chromosomes.</title>
        <authorList>
            <person name="van het Hoog M."/>
            <person name="Rast T.J."/>
            <person name="Martchenko M."/>
            <person name="Grindle S."/>
            <person name="Dignard D."/>
            <person name="Hogues H."/>
            <person name="Cuomo C."/>
            <person name="Berriman M."/>
            <person name="Scherer S."/>
            <person name="Magee B.B."/>
            <person name="Whiteway M."/>
            <person name="Chibana H."/>
            <person name="Nantel A."/>
            <person name="Magee P.T."/>
        </authorList>
    </citation>
    <scope>GENOME REANNOTATION</scope>
    <source>
        <strain>SC5314 / ATCC MYA-2876</strain>
    </source>
</reference>
<reference key="3">
    <citation type="journal article" date="2013" name="Genome Biol.">
        <title>Assembly of a phased diploid Candida albicans genome facilitates allele-specific measurements and provides a simple model for repeat and indel structure.</title>
        <authorList>
            <person name="Muzzey D."/>
            <person name="Schwartz K."/>
            <person name="Weissman J.S."/>
            <person name="Sherlock G."/>
        </authorList>
    </citation>
    <scope>NUCLEOTIDE SEQUENCE [LARGE SCALE GENOMIC DNA]</scope>
    <scope>GENOME REANNOTATION</scope>
    <source>
        <strain>SC5314 / ATCC MYA-2876</strain>
    </source>
</reference>
<reference key="4">
    <citation type="journal article" date="1993" name="Curr. Genet.">
        <title>Transport properties of a C. albicans amino-acid permease whose putative gene was cloned and expressed in S. cerevisiae.</title>
        <authorList>
            <person name="Sychrova H."/>
            <person name="Chevallier M.R."/>
        </authorList>
    </citation>
    <scope>FUNCTION</scope>
</reference>
<reference key="5">
    <citation type="journal article" date="1997" name="FEBS Lett.">
        <title>Biogenesis of Candida albicans Can1 permease expressed in Saccharomyces cerevisiae.</title>
        <authorList>
            <person name="Matijekova A."/>
            <person name="Sychrova H."/>
        </authorList>
    </citation>
    <scope>FUNCTION</scope>
</reference>
<reference key="6">
    <citation type="journal article" date="1999" name="FEMS Microbiol. Lett.">
        <title>Degradation of Candida albicans Can1 permease expressed in Saccharomyces cerevisiae.</title>
        <authorList>
            <person name="Matejckova-Forejtova A."/>
            <person name="Kinclova O."/>
            <person name="Sychrova H."/>
        </authorList>
    </citation>
    <scope>SUBCELLULAR LOCATION</scope>
</reference>
<reference key="7">
    <citation type="journal article" date="2004" name="Eukaryot. Cell">
        <title>Transcriptional response of Candida albicans upon internalization by macrophages.</title>
        <authorList>
            <person name="Lorenz M.C."/>
            <person name="Bender J.A."/>
            <person name="Fink G.R."/>
        </authorList>
    </citation>
    <scope>INDUCTION</scope>
</reference>
<reference key="8">
    <citation type="journal article" date="2009" name="J. Infect. Dis.">
        <title>Time course global gene expression analysis of an in vivo Candida biofilm.</title>
        <authorList>
            <person name="Nett J.E."/>
            <person name="Lepak A.J."/>
            <person name="Marchillo K."/>
            <person name="Andes D.R."/>
        </authorList>
    </citation>
    <scope>INDUCTION</scope>
</reference>
<reference key="9">
    <citation type="journal article" date="2011" name="Mol. Microbiol.">
        <title>Contribution of the glycolytic flux and hypoxia adaptation to efficient biofilm formation by Candida albicans.</title>
        <authorList>
            <person name="Bonhomme J."/>
            <person name="Chauvel M."/>
            <person name="Goyard S."/>
            <person name="Roux P."/>
            <person name="Rossignol T."/>
            <person name="d'Enfert C."/>
        </authorList>
    </citation>
    <scope>INDUCTION</scope>
</reference>
<reference key="10">
    <citation type="journal article" date="2012" name="Cell">
        <title>A recently evolved transcriptional network controls biofilm development in Candida albicans.</title>
        <authorList>
            <person name="Nobile C.J."/>
            <person name="Fox E.P."/>
            <person name="Nett J.E."/>
            <person name="Sorrells T.R."/>
            <person name="Mitrovich Q.M."/>
            <person name="Hernday A.D."/>
            <person name="Tuch B.B."/>
            <person name="Andes D.R."/>
            <person name="Johnson A.D."/>
        </authorList>
    </citation>
    <scope>INDUCTION</scope>
</reference>
<comment type="function">
    <text evidence="9 10">High-affinity permease for basic amino acids arginine, lysine and histidine (PubMed:8299168, PubMed:9180275).</text>
</comment>
<comment type="subcellular location">
    <subcellularLocation>
        <location evidence="4">Cell membrane</location>
        <topology evidence="1">Multi-pass membrane protein</topology>
    </subcellularLocation>
    <text evidence="4">Degraded in the vacuole after internalization by endocytosis in a ubiquitin-dependent manner when expressed in S.cereviae (PubMed:10418152).</text>
</comment>
<comment type="induction">
    <text evidence="5 6 7 8">Expression is induced during phagocytosis by host macrophages (PubMed:15470236). Expression is also induced during biofilm development (PubMed:19527170, PubMed:21414038, PubMed:22265407).</text>
</comment>
<comment type="similarity">
    <text evidence="12">Belongs to the amino acid-polyamine-organocation (APC) superfamily. YAT (TC 2.A.3.10) family.</text>
</comment>